<name>BCAR3_XENLA</name>
<keyword id="KW-0344">Guanine-nucleotide releasing factor</keyword>
<keyword id="KW-1185">Reference proteome</keyword>
<keyword id="KW-0727">SH2 domain</keyword>
<comment type="function">
    <text evidence="1">May act as an adapter protein.</text>
</comment>
<dbReference type="EMBL" id="BC072225">
    <property type="protein sequence ID" value="AAH72225.1"/>
    <property type="molecule type" value="mRNA"/>
</dbReference>
<dbReference type="RefSeq" id="NP_001085199.1">
    <property type="nucleotide sequence ID" value="NM_001091730.1"/>
</dbReference>
<dbReference type="SMR" id="Q6INP9"/>
<dbReference type="DNASU" id="432292"/>
<dbReference type="GeneID" id="432292"/>
<dbReference type="KEGG" id="xla:432292"/>
<dbReference type="AGR" id="Xenbase:XB-GENE-6076103"/>
<dbReference type="CTD" id="432292"/>
<dbReference type="Xenbase" id="XB-GENE-6076103">
    <property type="gene designation" value="bcar3.L"/>
</dbReference>
<dbReference type="OrthoDB" id="2412973at2759"/>
<dbReference type="Proteomes" id="UP000186698">
    <property type="component" value="Chromosome 4L"/>
</dbReference>
<dbReference type="Bgee" id="432292">
    <property type="expression patterns" value="Expressed in blastula and 19 other cell types or tissues"/>
</dbReference>
<dbReference type="GO" id="GO:0005085">
    <property type="term" value="F:guanyl-nucleotide exchange factor activity"/>
    <property type="evidence" value="ECO:0007669"/>
    <property type="project" value="UniProtKB-KW"/>
</dbReference>
<dbReference type="GO" id="GO:0001784">
    <property type="term" value="F:phosphotyrosine residue binding"/>
    <property type="evidence" value="ECO:0007669"/>
    <property type="project" value="InterPro"/>
</dbReference>
<dbReference type="GO" id="GO:0086100">
    <property type="term" value="P:endothelin receptor signaling pathway"/>
    <property type="evidence" value="ECO:0000318"/>
    <property type="project" value="GO_Central"/>
</dbReference>
<dbReference type="GO" id="GO:0007173">
    <property type="term" value="P:epidermal growth factor receptor signaling pathway"/>
    <property type="evidence" value="ECO:0000318"/>
    <property type="project" value="GO_Central"/>
</dbReference>
<dbReference type="GO" id="GO:0008286">
    <property type="term" value="P:insulin receptor signaling pathway"/>
    <property type="evidence" value="ECO:0000318"/>
    <property type="project" value="GO_Central"/>
</dbReference>
<dbReference type="GO" id="GO:0043410">
    <property type="term" value="P:positive regulation of MAPK cascade"/>
    <property type="evidence" value="ECO:0000318"/>
    <property type="project" value="GO_Central"/>
</dbReference>
<dbReference type="GO" id="GO:0007264">
    <property type="term" value="P:small GTPase-mediated signal transduction"/>
    <property type="evidence" value="ECO:0007669"/>
    <property type="project" value="InterPro"/>
</dbReference>
<dbReference type="CDD" id="cd10337">
    <property type="entry name" value="SH2_BCAR3"/>
    <property type="match status" value="1"/>
</dbReference>
<dbReference type="FunFam" id="1.10.840.10:FF:000007">
    <property type="entry name" value="SH2 domain containing 3C (Predicted)"/>
    <property type="match status" value="1"/>
</dbReference>
<dbReference type="FunFam" id="3.30.505.10:FF:000013">
    <property type="entry name" value="SH2 domain-containing protein 3C isoform X1"/>
    <property type="match status" value="1"/>
</dbReference>
<dbReference type="Gene3D" id="1.10.840.10">
    <property type="entry name" value="Ras guanine-nucleotide exchange factors catalytic domain"/>
    <property type="match status" value="1"/>
</dbReference>
<dbReference type="Gene3D" id="3.30.505.10">
    <property type="entry name" value="SH2 domain"/>
    <property type="match status" value="1"/>
</dbReference>
<dbReference type="InterPro" id="IPR023578">
    <property type="entry name" value="Ras_GEF_dom_sf"/>
</dbReference>
<dbReference type="InterPro" id="IPR001895">
    <property type="entry name" value="RASGEF_cat_dom"/>
</dbReference>
<dbReference type="InterPro" id="IPR036964">
    <property type="entry name" value="RASGEF_cat_dom_sf"/>
</dbReference>
<dbReference type="InterPro" id="IPR000980">
    <property type="entry name" value="SH2"/>
</dbReference>
<dbReference type="InterPro" id="IPR051853">
    <property type="entry name" value="SH2-Ras-GEF_adapter"/>
</dbReference>
<dbReference type="InterPro" id="IPR036860">
    <property type="entry name" value="SH2_dom_sf"/>
</dbReference>
<dbReference type="InterPro" id="IPR044102">
    <property type="entry name" value="SH2_SHEP1/BCAR3/NSP1"/>
</dbReference>
<dbReference type="PANTHER" id="PTHR14247:SF10">
    <property type="entry name" value="BREAST CANCER ANTI-ESTROGEN RESISTANCE PROTEIN 3"/>
    <property type="match status" value="1"/>
</dbReference>
<dbReference type="PANTHER" id="PTHR14247">
    <property type="entry name" value="BREAST CANCER ANTI-ESTROGEN RESISTANCE PROTEIN 3 HOMOLOG-LIKE PROTEIN"/>
    <property type="match status" value="1"/>
</dbReference>
<dbReference type="Pfam" id="PF00617">
    <property type="entry name" value="RasGEF"/>
    <property type="match status" value="1"/>
</dbReference>
<dbReference type="Pfam" id="PF00017">
    <property type="entry name" value="SH2"/>
    <property type="match status" value="1"/>
</dbReference>
<dbReference type="SMART" id="SM00147">
    <property type="entry name" value="RasGEF"/>
    <property type="match status" value="1"/>
</dbReference>
<dbReference type="SMART" id="SM00252">
    <property type="entry name" value="SH2"/>
    <property type="match status" value="1"/>
</dbReference>
<dbReference type="SUPFAM" id="SSF48366">
    <property type="entry name" value="Ras GEF"/>
    <property type="match status" value="1"/>
</dbReference>
<dbReference type="SUPFAM" id="SSF55550">
    <property type="entry name" value="SH2 domain"/>
    <property type="match status" value="1"/>
</dbReference>
<dbReference type="PROSITE" id="PS50009">
    <property type="entry name" value="RASGEF_CAT"/>
    <property type="match status" value="1"/>
</dbReference>
<dbReference type="PROSITE" id="PS50001">
    <property type="entry name" value="SH2"/>
    <property type="match status" value="1"/>
</dbReference>
<organism>
    <name type="scientific">Xenopus laevis</name>
    <name type="common">African clawed frog</name>
    <dbReference type="NCBI Taxonomy" id="8355"/>
    <lineage>
        <taxon>Eukaryota</taxon>
        <taxon>Metazoa</taxon>
        <taxon>Chordata</taxon>
        <taxon>Craniata</taxon>
        <taxon>Vertebrata</taxon>
        <taxon>Euteleostomi</taxon>
        <taxon>Amphibia</taxon>
        <taxon>Batrachia</taxon>
        <taxon>Anura</taxon>
        <taxon>Pipoidea</taxon>
        <taxon>Pipidae</taxon>
        <taxon>Xenopodinae</taxon>
        <taxon>Xenopus</taxon>
        <taxon>Xenopus</taxon>
    </lineage>
</organism>
<gene>
    <name type="primary">bcar3</name>
</gene>
<evidence type="ECO:0000250" key="1"/>
<evidence type="ECO:0000255" key="2">
    <source>
        <dbReference type="PROSITE-ProRule" id="PRU00168"/>
    </source>
</evidence>
<evidence type="ECO:0000255" key="3">
    <source>
        <dbReference type="PROSITE-ProRule" id="PRU00191"/>
    </source>
</evidence>
<evidence type="ECO:0000256" key="4">
    <source>
        <dbReference type="SAM" id="MobiDB-lite"/>
    </source>
</evidence>
<feature type="chain" id="PRO_0000230287" description="Breast cancer anti-estrogen resistance protein 3 homolog">
    <location>
        <begin position="1"/>
        <end position="806"/>
    </location>
</feature>
<feature type="domain" description="SH2" evidence="3">
    <location>
        <begin position="152"/>
        <end position="251"/>
    </location>
</feature>
<feature type="domain" description="Ras-GEF" evidence="2">
    <location>
        <begin position="538"/>
        <end position="805"/>
    </location>
</feature>
<feature type="region of interest" description="Disordered" evidence="4">
    <location>
        <begin position="308"/>
        <end position="343"/>
    </location>
</feature>
<feature type="region of interest" description="Disordered" evidence="4">
    <location>
        <begin position="390"/>
        <end position="412"/>
    </location>
</feature>
<reference key="1">
    <citation type="submission" date="2004-06" db="EMBL/GenBank/DDBJ databases">
        <authorList>
            <consortium name="NIH - Xenopus Gene Collection (XGC) project"/>
        </authorList>
    </citation>
    <scope>NUCLEOTIDE SEQUENCE [LARGE SCALE MRNA]</scope>
    <source>
        <tissue>Embryo</tissue>
    </source>
</reference>
<proteinExistence type="evidence at transcript level"/>
<sequence>MAAGKFASYHRNVQMNHPLVSSMDLLGSKSALGERRSDAFKNVCIHGTLPRKKKERVPIRSSDMFCHMGTLPHTKSHRLPNPLMQDIKEDYPFQERRTGIFNMREHYLDPAMEYVKFSKDRYIMDGGTPDKLKKELEEELKLNSEDLRSHAWYHGRIPRQVSESLVKRDGDFLIRDSLSSPGNLVLTCQWKNLSQHFKINKVVIRLNEAYCRIQYQLEHESFDSIPALVRFYVGNRKAVSQQSGAIIFQPINRTVPLRCIEEKYGTSPVRRLELGIMEVKSEPTKRLSLNFGQGISQEQSLVRGNLLRNKEKSGSQPACLDNMREKRRPLKAHQSESYLPLGSRQPCLSQGMDMKTSPKPHVFRTGSEPTLSPTEIRRFNHEVHPVEALRGSDSQLCPRPPPKPTKAPSIKQSQSPLVWQSSEANYCEFHPTPPEDCAWSDSHSSHNSYIEDQRTDEIETLSFSNSELSFPALDDSISQCSATDFCGNVEDDEFIRPVYETVSSFCPNDFQSVLLTAENKPLETSLLRRAKELFTNNDPRTIAKHILRMDCKVARILDVTPEVERMMGVSSGLELIILPYGHQLRLDLMERHSTMAIGIAVDILGCTGNLEERVATLHKIIQLAVEVKTLGDYFAFSAIMKALDMPQITRLEQTWTMLRHQYTQTAITYEKQLKPFSKYLHEGEALDAQEDVTVPLVMPLVTLLERQSVLFEGMDFWENNDRGCEILFNHLQTARQVAHNATVYKKNAQRILEGFKPDELMSEIFKTEFQMRLLWGSKGALLKQSERYHKFGQILTALSRKLEPPS</sequence>
<accession>Q6INP9</accession>
<protein>
    <recommendedName>
        <fullName>Breast cancer anti-estrogen resistance protein 3 homolog</fullName>
    </recommendedName>
</protein>